<keyword id="KW-1185">Reference proteome</keyword>
<keyword id="KW-0687">Ribonucleoprotein</keyword>
<keyword id="KW-0689">Ribosomal protein</keyword>
<feature type="chain" id="PRO_1000127107" description="Small ribosomal subunit protein uS10">
    <location>
        <begin position="1"/>
        <end position="105"/>
    </location>
</feature>
<accession>A9KJJ5</accession>
<evidence type="ECO:0000255" key="1">
    <source>
        <dbReference type="HAMAP-Rule" id="MF_00508"/>
    </source>
</evidence>
<evidence type="ECO:0000305" key="2"/>
<reference key="1">
    <citation type="submission" date="2007-11" db="EMBL/GenBank/DDBJ databases">
        <title>Complete genome sequence of Clostridium phytofermentans ISDg.</title>
        <authorList>
            <person name="Leschine S.B."/>
            <person name="Warnick T.A."/>
            <person name="Blanchard J.L."/>
            <person name="Schnell D.J."/>
            <person name="Petit E.L."/>
            <person name="LaTouf W.G."/>
            <person name="Copeland A."/>
            <person name="Lucas S."/>
            <person name="Lapidus A."/>
            <person name="Barry K."/>
            <person name="Glavina del Rio T."/>
            <person name="Dalin E."/>
            <person name="Tice H."/>
            <person name="Pitluck S."/>
            <person name="Kiss H."/>
            <person name="Brettin T."/>
            <person name="Bruce D."/>
            <person name="Detter J.C."/>
            <person name="Han C."/>
            <person name="Kuske C."/>
            <person name="Schmutz J."/>
            <person name="Larimer F."/>
            <person name="Land M."/>
            <person name="Hauser L."/>
            <person name="Kyrpides N."/>
            <person name="Kim E.A."/>
            <person name="Richardson P."/>
        </authorList>
    </citation>
    <scope>NUCLEOTIDE SEQUENCE [LARGE SCALE GENOMIC DNA]</scope>
    <source>
        <strain>ATCC 700394 / DSM 18823 / ISDg</strain>
    </source>
</reference>
<protein>
    <recommendedName>
        <fullName evidence="1">Small ribosomal subunit protein uS10</fullName>
    </recommendedName>
    <alternativeName>
        <fullName evidence="2">30S ribosomal protein S10</fullName>
    </alternativeName>
</protein>
<dbReference type="EMBL" id="CP000885">
    <property type="protein sequence ID" value="ABX44015.1"/>
    <property type="molecule type" value="Genomic_DNA"/>
</dbReference>
<dbReference type="RefSeq" id="WP_012201663.1">
    <property type="nucleotide sequence ID" value="NC_010001.1"/>
</dbReference>
<dbReference type="SMR" id="A9KJJ5"/>
<dbReference type="STRING" id="357809.Cphy_3668"/>
<dbReference type="KEGG" id="cpy:Cphy_3668"/>
<dbReference type="eggNOG" id="COG0051">
    <property type="taxonomic scope" value="Bacteria"/>
</dbReference>
<dbReference type="HOGENOM" id="CLU_122625_1_2_9"/>
<dbReference type="OrthoDB" id="9804464at2"/>
<dbReference type="Proteomes" id="UP000000370">
    <property type="component" value="Chromosome"/>
</dbReference>
<dbReference type="GO" id="GO:1990904">
    <property type="term" value="C:ribonucleoprotein complex"/>
    <property type="evidence" value="ECO:0007669"/>
    <property type="project" value="UniProtKB-KW"/>
</dbReference>
<dbReference type="GO" id="GO:0005840">
    <property type="term" value="C:ribosome"/>
    <property type="evidence" value="ECO:0007669"/>
    <property type="project" value="UniProtKB-KW"/>
</dbReference>
<dbReference type="GO" id="GO:0003735">
    <property type="term" value="F:structural constituent of ribosome"/>
    <property type="evidence" value="ECO:0007669"/>
    <property type="project" value="InterPro"/>
</dbReference>
<dbReference type="GO" id="GO:0000049">
    <property type="term" value="F:tRNA binding"/>
    <property type="evidence" value="ECO:0007669"/>
    <property type="project" value="UniProtKB-UniRule"/>
</dbReference>
<dbReference type="GO" id="GO:0006412">
    <property type="term" value="P:translation"/>
    <property type="evidence" value="ECO:0007669"/>
    <property type="project" value="UniProtKB-UniRule"/>
</dbReference>
<dbReference type="FunFam" id="3.30.70.600:FF:000003">
    <property type="entry name" value="30S ribosomal protein S10"/>
    <property type="match status" value="1"/>
</dbReference>
<dbReference type="Gene3D" id="3.30.70.600">
    <property type="entry name" value="Ribosomal protein S10 domain"/>
    <property type="match status" value="1"/>
</dbReference>
<dbReference type="HAMAP" id="MF_00508">
    <property type="entry name" value="Ribosomal_uS10"/>
    <property type="match status" value="1"/>
</dbReference>
<dbReference type="InterPro" id="IPR001848">
    <property type="entry name" value="Ribosomal_uS10"/>
</dbReference>
<dbReference type="InterPro" id="IPR018268">
    <property type="entry name" value="Ribosomal_uS10_CS"/>
</dbReference>
<dbReference type="InterPro" id="IPR027486">
    <property type="entry name" value="Ribosomal_uS10_dom"/>
</dbReference>
<dbReference type="InterPro" id="IPR036838">
    <property type="entry name" value="Ribosomal_uS10_dom_sf"/>
</dbReference>
<dbReference type="NCBIfam" id="NF001861">
    <property type="entry name" value="PRK00596.1"/>
    <property type="match status" value="1"/>
</dbReference>
<dbReference type="NCBIfam" id="TIGR01049">
    <property type="entry name" value="rpsJ_bact"/>
    <property type="match status" value="1"/>
</dbReference>
<dbReference type="PANTHER" id="PTHR11700">
    <property type="entry name" value="30S RIBOSOMAL PROTEIN S10 FAMILY MEMBER"/>
    <property type="match status" value="1"/>
</dbReference>
<dbReference type="Pfam" id="PF00338">
    <property type="entry name" value="Ribosomal_S10"/>
    <property type="match status" value="1"/>
</dbReference>
<dbReference type="PRINTS" id="PR00971">
    <property type="entry name" value="RIBOSOMALS10"/>
</dbReference>
<dbReference type="SMART" id="SM01403">
    <property type="entry name" value="Ribosomal_S10"/>
    <property type="match status" value="1"/>
</dbReference>
<dbReference type="SUPFAM" id="SSF54999">
    <property type="entry name" value="Ribosomal protein S10"/>
    <property type="match status" value="1"/>
</dbReference>
<dbReference type="PROSITE" id="PS00361">
    <property type="entry name" value="RIBOSOMAL_S10"/>
    <property type="match status" value="1"/>
</dbReference>
<organism>
    <name type="scientific">Lachnoclostridium phytofermentans (strain ATCC 700394 / DSM 18823 / ISDg)</name>
    <name type="common">Clostridium phytofermentans</name>
    <dbReference type="NCBI Taxonomy" id="357809"/>
    <lineage>
        <taxon>Bacteria</taxon>
        <taxon>Bacillati</taxon>
        <taxon>Bacillota</taxon>
        <taxon>Clostridia</taxon>
        <taxon>Lachnospirales</taxon>
        <taxon>Lachnospiraceae</taxon>
    </lineage>
</organism>
<gene>
    <name evidence="1" type="primary">rpsJ</name>
    <name type="ordered locus">Cphy_3668</name>
</gene>
<comment type="function">
    <text evidence="1">Involved in the binding of tRNA to the ribosomes.</text>
</comment>
<comment type="subunit">
    <text evidence="1">Part of the 30S ribosomal subunit.</text>
</comment>
<comment type="similarity">
    <text evidence="1">Belongs to the universal ribosomal protein uS10 family.</text>
</comment>
<name>RS10_LACP7</name>
<sequence length="105" mass="11836">MANQVMRITLKAYDHHLIDASAGKIIETVKKTGSKVSGPVPLPTKKEIVTVLRAVHKYKDSREQFEQRTHKRLIDIIAPTQKTVDALSRLEMPAGVYIDIKMKAK</sequence>
<proteinExistence type="inferred from homology"/>